<protein>
    <recommendedName>
        <fullName>Kappa-casein</fullName>
    </recommendedName>
</protein>
<feature type="signal peptide">
    <location>
        <begin position="1"/>
        <end position="20"/>
    </location>
</feature>
<feature type="chain" id="PRO_0000004498" description="Kappa-casein">
    <location>
        <begin position="21"/>
        <end position="182"/>
    </location>
</feature>
<feature type="site" description="Cleavage; by chymosin/rennin">
    <location>
        <begin position="117"/>
        <end position="118"/>
    </location>
</feature>
<feature type="modified residue" description="Phosphothreonine; alternate" evidence="1">
    <location>
        <position position="157"/>
    </location>
</feature>
<feature type="glycosylation site" description="O-linked (GalNAc...) threonine" evidence="3">
    <location>
        <position position="133"/>
    </location>
</feature>
<feature type="glycosylation site" description="O-linked (GalNAc...) threonine" evidence="3">
    <location>
        <position position="143"/>
    </location>
</feature>
<feature type="glycosylation site" description="O-linked (GalNAc...) threonine" evidence="3">
    <location>
        <position position="148"/>
    </location>
</feature>
<feature type="glycosylation site" description="O-linked (GalNAc...) threonine" evidence="3">
    <location>
        <position position="151"/>
    </location>
</feature>
<feature type="glycosylation site" description="O-linked (GalNAc...) threonine; alternate" evidence="3">
    <location>
        <position position="157"/>
    </location>
</feature>
<feature type="glycosylation site" description="O-linked (GalNAc...) threonine" evidence="3">
    <location>
        <position position="167"/>
    </location>
</feature>
<feature type="glycosylation site" description="O-linked (GalNAc...) threonine" evidence="3">
    <location>
        <position position="169"/>
    </location>
</feature>
<feature type="glycosylation site" description="O-linked (GalNAc...) threonine" evidence="1">
    <location>
        <position position="178"/>
    </location>
</feature>
<feature type="sequence variant" id="VAR_026338" description="In dbSNP:rs17850702." evidence="2">
    <original>Y</original>
    <variation>C</variation>
    <location>
        <position position="75"/>
    </location>
</feature>
<feature type="sequence variant" id="VAR_026339" description="In dbSNP:rs1048152." evidence="4">
    <original>R</original>
    <variation>L</variation>
    <location>
        <position position="110"/>
    </location>
</feature>
<feature type="sequence variant" id="VAR_026340" description="In dbSNP:rs3775739." evidence="5">
    <original>A</original>
    <variation>T</variation>
    <location>
        <position position="145"/>
    </location>
</feature>
<feature type="sequence conflict" description="In Ref. 5; AA sequence." evidence="6" ref="5">
    <original>QKQ</original>
    <variation>EQK</variation>
    <location>
        <begin position="25"/>
        <end position="27"/>
    </location>
</feature>
<feature type="sequence conflict" description="In Ref. 5; AA sequence." evidence="6" ref="5">
    <original>D</original>
    <variation>N</variation>
    <location>
        <position position="153"/>
    </location>
</feature>
<feature type="sequence conflict" description="In Ref. 6; AA sequence." evidence="6" ref="6">
    <original>F</original>
    <variation>T</variation>
    <location>
        <position position="161"/>
    </location>
</feature>
<feature type="sequence conflict" description="In Ref. 5; AA sequence and 6; AA sequence." evidence="6" ref="5 6">
    <original>S</original>
    <variation>T</variation>
    <location>
        <position position="162"/>
    </location>
</feature>
<feature type="sequence conflict" description="In Ref. 5; AA sequence and 6; AA sequence." evidence="6" ref="5 6">
    <original>T</original>
    <variation>P</variation>
    <location>
        <position position="173"/>
    </location>
</feature>
<feature type="sequence conflict" description="In Ref. 5; AA sequence and 6; AA sequence." evidence="6" ref="5 6">
    <original>TPPT</original>
    <variation>PTTS</variation>
    <location>
        <begin position="178"/>
        <end position="181"/>
    </location>
</feature>
<gene>
    <name type="primary">CSN3</name>
    <name type="synonym">CASK</name>
    <name type="synonym">CSN10</name>
    <name type="synonym">CSNK</name>
</gene>
<reference key="1">
    <citation type="submission" date="1991-07" db="EMBL/GenBank/DDBJ databases">
        <authorList>
            <person name="Menon R.S."/>
            <person name="Jeffers K.F."/>
            <person name="Chang Y.F."/>
            <person name="Ham R.G."/>
        </authorList>
    </citation>
    <scope>NUCLEOTIDE SEQUENCE [MRNA]</scope>
    <scope>VARIANT THR-145</scope>
</reference>
<reference key="2">
    <citation type="journal article" date="1992" name="DNA Seq.">
        <title>Cloning and sequencing of human kappa-casein cDNA.</title>
        <authorList>
            <person name="Bergstroem S."/>
            <person name="Hansson L."/>
            <person name="Hernell O."/>
            <person name="Loennerdal B."/>
            <person name="Nilsson A.K."/>
            <person name="Stroemqvist M."/>
        </authorList>
    </citation>
    <scope>NUCLEOTIDE SEQUENCE [MRNA]</scope>
    <source>
        <tissue>Mammary gland</tissue>
    </source>
</reference>
<reference key="3">
    <citation type="journal article" date="1996" name="Gene">
        <title>Structure of the human kappa-casein gene.</title>
        <authorList>
            <person name="Edlund A."/>
            <person name="Johansson T."/>
            <person name="Leidvik B."/>
            <person name="Hansson L."/>
        </authorList>
    </citation>
    <scope>NUCLEOTIDE SEQUENCE [GENOMIC DNA / MRNA]</scope>
    <scope>VARIANT LEU-110</scope>
</reference>
<reference key="4">
    <citation type="journal article" date="2004" name="Genome Res.">
        <title>The status, quality, and expansion of the NIH full-length cDNA project: the Mammalian Gene Collection (MGC).</title>
        <authorList>
            <consortium name="The MGC Project Team"/>
        </authorList>
    </citation>
    <scope>NUCLEOTIDE SEQUENCE [LARGE SCALE MRNA]</scope>
    <scope>VARIANT CYS-75</scope>
    <source>
        <tissue>Brain</tissue>
    </source>
</reference>
<reference key="5">
    <citation type="journal article" date="1985" name="FEBS Lett.">
        <title>Preparation and amino acid sequence of human kappa-casein.</title>
        <authorList>
            <person name="Brignon G."/>
            <person name="Chtourou A."/>
            <person name="Ribadeau-Dumas B."/>
        </authorList>
    </citation>
    <scope>PROTEIN SEQUENCE OF 25-182</scope>
</reference>
<reference key="6">
    <citation type="journal article" date="1980" name="Eur. J. Biochem.">
        <title>Localisation and importance of the sugar part of human casein.</title>
        <authorList>
            <person name="Fiat A.-M."/>
            <person name="Jolles J."/>
            <person name="Aubert J.-P."/>
            <person name="Loucheux-Lefebvre M.H."/>
            <person name="Jolles P."/>
        </authorList>
    </citation>
    <scope>PROTEIN SEQUENCE OF 118-182</scope>
    <scope>GLYCOSYLATION AT THR-133; THR-143; THR-148; THR-151; THR-157; THR-167 AND THR-169</scope>
</reference>
<reference key="7">
    <citation type="journal article" date="1999" name="J. Dairy Res.">
        <title>Structural features of a peptide corresponding to human kappa-casein residues 84-101 by 1H-nuclear magnetic resonance spectroscopy.</title>
        <authorList>
            <person name="Plowman J.E."/>
            <person name="Creamer L.K."/>
            <person name="Liddell M.J."/>
            <person name="Cross J.J."/>
        </authorList>
    </citation>
    <scope>STRUCTURE BY NMR OF 108-125</scope>
</reference>
<keyword id="KW-0903">Direct protein sequencing</keyword>
<keyword id="KW-1015">Disulfide bond</keyword>
<keyword id="KW-0325">Glycoprotein</keyword>
<keyword id="KW-0494">Milk protein</keyword>
<keyword id="KW-0597">Phosphoprotein</keyword>
<keyword id="KW-1267">Proteomics identification</keyword>
<keyword id="KW-1185">Reference proteome</keyword>
<keyword id="KW-0964">Secreted</keyword>
<keyword id="KW-0732">Signal</keyword>
<name>CASK_HUMAN</name>
<accession>P07498</accession>
<accession>Q13575</accession>
<proteinExistence type="evidence at protein level"/>
<organism>
    <name type="scientific">Homo sapiens</name>
    <name type="common">Human</name>
    <dbReference type="NCBI Taxonomy" id="9606"/>
    <lineage>
        <taxon>Eukaryota</taxon>
        <taxon>Metazoa</taxon>
        <taxon>Chordata</taxon>
        <taxon>Craniata</taxon>
        <taxon>Vertebrata</taxon>
        <taxon>Euteleostomi</taxon>
        <taxon>Mammalia</taxon>
        <taxon>Eutheria</taxon>
        <taxon>Euarchontoglires</taxon>
        <taxon>Primates</taxon>
        <taxon>Haplorrhini</taxon>
        <taxon>Catarrhini</taxon>
        <taxon>Hominidae</taxon>
        <taxon>Homo</taxon>
    </lineage>
</organism>
<sequence length="182" mass="20305">MKSFLLVVNALALTLPFLAVEVQNQKQPACHENDERPFYQKTAPYVPMYYVPNSYPYYGTNLYQRRPAIAINNPYVPRTYYANPAVVRPHAQIPQRQYLPNSHPPTVVRRPNLHPSFIAIPPKKIQDKIIIPTINTIATVEPTPAPATEPTVDSVVTPEAFSESIITSTPETTTVAVTPPTA</sequence>
<evidence type="ECO:0000250" key="1">
    <source>
        <dbReference type="UniProtKB" id="P02668"/>
    </source>
</evidence>
<evidence type="ECO:0000269" key="2">
    <source>
    </source>
</evidence>
<evidence type="ECO:0000269" key="3">
    <source>
    </source>
</evidence>
<evidence type="ECO:0000269" key="4">
    <source>
    </source>
</evidence>
<evidence type="ECO:0000269" key="5">
    <source ref="1"/>
</evidence>
<evidence type="ECO:0000305" key="6"/>
<comment type="function">
    <text>Kappa-casein stabilizes micelle formation, preventing casein precipitation in milk.</text>
</comment>
<comment type="subunit">
    <text>Heteromultimers composed of alpha-s1 casein and kappa casein linked by disulfide bonds.</text>
</comment>
<comment type="interaction">
    <interactant intactId="EBI-2602175">
        <id>P07498</id>
    </interactant>
    <interactant intactId="EBI-740322">
        <id>Q93062</id>
        <label>RBPMS</label>
    </interactant>
    <organismsDiffer>false</organismsDiffer>
    <experiments>4</experiments>
</comment>
<comment type="interaction">
    <interactant intactId="EBI-2602175">
        <id>P07498</id>
    </interactant>
    <interactant intactId="EBI-741480">
        <id>Q9UMX0</id>
        <label>UBQLN1</label>
    </interactant>
    <organismsDiffer>false</organismsDiffer>
    <experiments>3</experiments>
</comment>
<comment type="interaction">
    <interactant intactId="EBI-2602175">
        <id>P07498</id>
    </interactant>
    <interactant intactId="EBI-947187">
        <id>Q9UHD9</id>
        <label>UBQLN2</label>
    </interactant>
    <organismsDiffer>false</organismsDiffer>
    <experiments>3</experiments>
</comment>
<comment type="interaction">
    <interactant intactId="EBI-2602175">
        <id>P07498</id>
    </interactant>
    <interactant intactId="EBI-10191303">
        <id>O95231</id>
        <label>VENTX</label>
    </interactant>
    <organismsDiffer>false</organismsDiffer>
    <experiments>3</experiments>
</comment>
<comment type="interaction">
    <interactant intactId="EBI-2602175">
        <id>P07498</id>
    </interactant>
    <interactant intactId="EBI-7254550">
        <id>P36508</id>
        <label>ZNF76</label>
    </interactant>
    <organismsDiffer>false</organismsDiffer>
    <experiments>3</experiments>
</comment>
<comment type="subcellular location">
    <subcellularLocation>
        <location>Secreted</location>
    </subcellularLocation>
</comment>
<comment type="tissue specificity">
    <text>Mammary gland specific. Secreted in milk.</text>
</comment>
<comment type="PTM">
    <text>The N-terminus is blocked.</text>
</comment>
<comment type="similarity">
    <text evidence="6">Belongs to the kappa-casein family.</text>
</comment>
<comment type="online information" name="Protein Spotlight">
    <link uri="https://www.proteinspotlight.org/back_issues/016"/>
    <text>Of buttons, digestion and glue - Issue 16 of November 2001</text>
</comment>
<dbReference type="EMBL" id="M73628">
    <property type="protein sequence ID" value="AAA59456.1"/>
    <property type="molecule type" value="mRNA"/>
</dbReference>
<dbReference type="EMBL" id="X66417">
    <property type="protein sequence ID" value="CAA47048.1"/>
    <property type="molecule type" value="mRNA"/>
</dbReference>
<dbReference type="EMBL" id="U51899">
    <property type="protein sequence ID" value="AAC50772.1"/>
    <property type="molecule type" value="Genomic_DNA"/>
</dbReference>
<dbReference type="EMBL" id="BC010935">
    <property type="protein sequence ID" value="AAH10935.1"/>
    <property type="molecule type" value="mRNA"/>
</dbReference>
<dbReference type="CCDS" id="CCDS3538.1"/>
<dbReference type="PIR" id="JC4957">
    <property type="entry name" value="KKHU"/>
</dbReference>
<dbReference type="RefSeq" id="NP_001381926.1">
    <property type="nucleotide sequence ID" value="NM_001394997.1"/>
</dbReference>
<dbReference type="RefSeq" id="NP_005203.2">
    <property type="nucleotide sequence ID" value="NM_005212.3"/>
</dbReference>
<dbReference type="RefSeq" id="XP_011529922.1">
    <property type="nucleotide sequence ID" value="XM_011531620.2"/>
</dbReference>
<dbReference type="RefSeq" id="XP_016863250.1">
    <property type="nucleotide sequence ID" value="XM_017007761.2"/>
</dbReference>
<dbReference type="BioGRID" id="107835">
    <property type="interactions" value="20"/>
</dbReference>
<dbReference type="FunCoup" id="P07498">
    <property type="interactions" value="82"/>
</dbReference>
<dbReference type="IntAct" id="P07498">
    <property type="interactions" value="11"/>
</dbReference>
<dbReference type="MINT" id="P07498"/>
<dbReference type="STRING" id="9606.ENSP00000304822"/>
<dbReference type="ChEMBL" id="CHEMBL3621024"/>
<dbReference type="DrugBank" id="DB12010">
    <property type="generic name" value="Fostamatinib"/>
</dbReference>
<dbReference type="Allergome" id="1064">
    <property type="allergen name" value="Hom s 8"/>
</dbReference>
<dbReference type="GlyConnect" id="308">
    <property type="glycosylation" value="11 O-Linked glycans"/>
</dbReference>
<dbReference type="GlyCosmos" id="P07498">
    <property type="glycosylation" value="10 sites, 14 glycans"/>
</dbReference>
<dbReference type="GlyGen" id="P07498">
    <property type="glycosylation" value="11 sites, 14 O-linked glycans (11 sites)"/>
</dbReference>
<dbReference type="iPTMnet" id="P07498"/>
<dbReference type="PhosphoSitePlus" id="P07498"/>
<dbReference type="SwissPalm" id="P07498"/>
<dbReference type="BioMuta" id="CSN3"/>
<dbReference type="jPOST" id="P07498"/>
<dbReference type="MassIVE" id="P07498"/>
<dbReference type="PaxDb" id="9606-ENSP00000304822"/>
<dbReference type="PeptideAtlas" id="P07498"/>
<dbReference type="ProteomicsDB" id="52011"/>
<dbReference type="TopDownProteomics" id="P07498"/>
<dbReference type="Antibodypedia" id="24320">
    <property type="antibodies" value="92 antibodies from 20 providers"/>
</dbReference>
<dbReference type="DNASU" id="1448"/>
<dbReference type="Ensembl" id="ENST00000304954.4">
    <property type="protein sequence ID" value="ENSP00000304822.3"/>
    <property type="gene ID" value="ENSG00000171209.4"/>
</dbReference>
<dbReference type="Ensembl" id="ENST00000689459.1">
    <property type="protein sequence ID" value="ENSP00000508633.1"/>
    <property type="gene ID" value="ENSG00000171209.4"/>
</dbReference>
<dbReference type="GeneID" id="1448"/>
<dbReference type="KEGG" id="hsa:1448"/>
<dbReference type="MANE-Select" id="ENST00000304954.4">
    <property type="protein sequence ID" value="ENSP00000304822.3"/>
    <property type="RefSeq nucleotide sequence ID" value="NM_001394997.1"/>
    <property type="RefSeq protein sequence ID" value="NP_001381926.1"/>
</dbReference>
<dbReference type="UCSC" id="uc003hfe.5">
    <property type="organism name" value="human"/>
</dbReference>
<dbReference type="AGR" id="HGNC:2446"/>
<dbReference type="CTD" id="1448"/>
<dbReference type="DisGeNET" id="1448"/>
<dbReference type="GeneCards" id="CSN3"/>
<dbReference type="HGNC" id="HGNC:2446">
    <property type="gene designation" value="CSN3"/>
</dbReference>
<dbReference type="HPA" id="ENSG00000171209">
    <property type="expression patterns" value="Tissue enriched (breast)"/>
</dbReference>
<dbReference type="MIM" id="601695">
    <property type="type" value="gene"/>
</dbReference>
<dbReference type="neXtProt" id="NX_P07498"/>
<dbReference type="OpenTargets" id="ENSG00000171209"/>
<dbReference type="PharmGKB" id="PA26949"/>
<dbReference type="VEuPathDB" id="HostDB:ENSG00000171209"/>
<dbReference type="eggNOG" id="ENOG502TM2T">
    <property type="taxonomic scope" value="Eukaryota"/>
</dbReference>
<dbReference type="GeneTree" id="ENSGT00390000009184"/>
<dbReference type="HOGENOM" id="CLU_103388_0_0_1"/>
<dbReference type="InParanoid" id="P07498"/>
<dbReference type="OMA" id="YYVPNSY"/>
<dbReference type="OrthoDB" id="9836334at2759"/>
<dbReference type="PAN-GO" id="P07498">
    <property type="GO annotations" value="3 GO annotations based on evolutionary models"/>
</dbReference>
<dbReference type="PhylomeDB" id="P07498"/>
<dbReference type="TreeFam" id="TF338369"/>
<dbReference type="PathwayCommons" id="P07498"/>
<dbReference type="Reactome" id="R-HSA-5223345">
    <property type="pathway name" value="Miscellaneous transport and binding events"/>
</dbReference>
<dbReference type="SignaLink" id="P07498"/>
<dbReference type="BioGRID-ORCS" id="1448">
    <property type="hits" value="12 hits in 1134 CRISPR screens"/>
</dbReference>
<dbReference type="ChiTaRS" id="CSN3">
    <property type="organism name" value="human"/>
</dbReference>
<dbReference type="GeneWiki" id="CSN3_(gene)"/>
<dbReference type="GenomeRNAi" id="1448"/>
<dbReference type="Pharos" id="P07498">
    <property type="development level" value="Tbio"/>
</dbReference>
<dbReference type="PRO" id="PR:P07498"/>
<dbReference type="Proteomes" id="UP000005640">
    <property type="component" value="Chromosome 4"/>
</dbReference>
<dbReference type="RNAct" id="P07498">
    <property type="molecule type" value="protein"/>
</dbReference>
<dbReference type="Bgee" id="ENSG00000171209">
    <property type="expression patterns" value="Expressed in buccal mucosa cell and 64 other cell types or tissues"/>
</dbReference>
<dbReference type="GO" id="GO:0005576">
    <property type="term" value="C:extracellular region"/>
    <property type="evidence" value="ECO:0000304"/>
    <property type="project" value="Reactome"/>
</dbReference>
<dbReference type="GO" id="GO:0005615">
    <property type="term" value="C:extracellular space"/>
    <property type="evidence" value="ECO:0000314"/>
    <property type="project" value="UniProtKB"/>
</dbReference>
<dbReference type="GO" id="GO:0007595">
    <property type="term" value="P:lactation"/>
    <property type="evidence" value="ECO:0000314"/>
    <property type="project" value="UniProtKB"/>
</dbReference>
<dbReference type="GO" id="GO:0050821">
    <property type="term" value="P:protein stabilization"/>
    <property type="evidence" value="ECO:0000314"/>
    <property type="project" value="UniProtKB"/>
</dbReference>
<dbReference type="InterPro" id="IPR000117">
    <property type="entry name" value="Casein_kappa"/>
</dbReference>
<dbReference type="PANTHER" id="PTHR11470">
    <property type="entry name" value="KAPPA CASEIN"/>
    <property type="match status" value="1"/>
</dbReference>
<dbReference type="PANTHER" id="PTHR11470:SF2">
    <property type="entry name" value="KAPPA-CASEIN"/>
    <property type="match status" value="1"/>
</dbReference>
<dbReference type="Pfam" id="PF00997">
    <property type="entry name" value="Casein_kappa"/>
    <property type="match status" value="1"/>
</dbReference>
<dbReference type="PIRSF" id="PIRSF002374">
    <property type="entry name" value="Casein_kappa"/>
    <property type="match status" value="1"/>
</dbReference>